<accession>O16053</accession>
<accession>Q6XHS4</accession>
<gene>
    <name type="ORF">GE14456</name>
</gene>
<protein>
    <recommendedName>
        <fullName>Protein CDV3 homolog</fullName>
    </recommendedName>
    <alternativeName>
        <fullName>Protein anon-2C9</fullName>
    </alternativeName>
</protein>
<proteinExistence type="evidence at transcript level"/>
<name>CDV3_DROYA</name>
<feature type="chain" id="PRO_0000299569" description="Protein CDV3 homolog">
    <location>
        <begin position="1"/>
        <end position="268"/>
    </location>
</feature>
<feature type="region of interest" description="Disordered" evidence="1">
    <location>
        <begin position="40"/>
        <end position="145"/>
    </location>
</feature>
<feature type="region of interest" description="Disordered" evidence="1">
    <location>
        <begin position="184"/>
        <end position="268"/>
    </location>
</feature>
<feature type="compositionally biased region" description="Basic and acidic residues" evidence="1">
    <location>
        <begin position="40"/>
        <end position="50"/>
    </location>
</feature>
<feature type="compositionally biased region" description="Low complexity" evidence="1">
    <location>
        <begin position="51"/>
        <end position="61"/>
    </location>
</feature>
<feature type="compositionally biased region" description="Acidic residues" evidence="1">
    <location>
        <begin position="76"/>
        <end position="85"/>
    </location>
</feature>
<feature type="compositionally biased region" description="Polar residues" evidence="1">
    <location>
        <begin position="98"/>
        <end position="107"/>
    </location>
</feature>
<feature type="compositionally biased region" description="Acidic residues" evidence="1">
    <location>
        <begin position="123"/>
        <end position="132"/>
    </location>
</feature>
<feature type="compositionally biased region" description="Basic and acidic residues" evidence="1">
    <location>
        <begin position="221"/>
        <end position="239"/>
    </location>
</feature>
<feature type="sequence conflict" description="In Ref. 2; AAR10132." evidence="2" ref="2">
    <original>T</original>
    <variation>A</variation>
    <location>
        <position position="113"/>
    </location>
</feature>
<sequence>MQAMAELDDFFAKKDKKKSKNKTKFVTADEMVKNLEDGTKREVVKPKKPEAAAGGVAVVGENENSGTKVPESAPPVEEEWKEFEEEQRKDYSGLKIGQLSTITAQESAESRATRVPTAQDGGNYDEDDEDSNGYDNADVNKERVGHGPWKKVVPAEEVMQIPVPVEVEKPSSKTYVSPALRYSQQAGSGLGGGTVGGALRPRRAAPDITNTEFFPTLSAARPEEQRKKKNEPAFEEVRHGSRFQRVQESTAAPVAASNRFQSLDDEAS</sequence>
<reference key="1">
    <citation type="journal article" date="1997" name="Proc. Natl. Acad. Sci. U.S.A.">
        <title>A screen for fast evolving genes from Drosophila.</title>
        <authorList>
            <person name="Schmid K.J."/>
            <person name="Tautz D."/>
        </authorList>
    </citation>
    <scope>NUCLEOTIDE SEQUENCE [MRNA]</scope>
    <source>
        <tissue>Embryo</tissue>
    </source>
</reference>
<reference key="2">
    <citation type="journal article" date="2003" name="Genome Res.">
        <title>An evolutionary analysis of orphan genes in Drosophila.</title>
        <authorList>
            <person name="Domazet-Loso T."/>
            <person name="Tautz D."/>
        </authorList>
    </citation>
    <scope>NUCLEOTIDE SEQUENCE [MRNA] OF 4-193</scope>
</reference>
<dbReference type="EMBL" id="AF005858">
    <property type="protein sequence ID" value="AAB81489.1"/>
    <property type="molecule type" value="mRNA"/>
</dbReference>
<dbReference type="EMBL" id="AY232109">
    <property type="protein sequence ID" value="AAR10132.1"/>
    <property type="molecule type" value="mRNA"/>
</dbReference>
<dbReference type="eggNOG" id="ENOG502S35X">
    <property type="taxonomic scope" value="Eukaryota"/>
</dbReference>
<dbReference type="OrthoDB" id="6288097at2759"/>
<dbReference type="GO" id="GO:0005737">
    <property type="term" value="C:cytoplasm"/>
    <property type="evidence" value="ECO:0007669"/>
    <property type="project" value="TreeGrafter"/>
</dbReference>
<dbReference type="InterPro" id="IPR026806">
    <property type="entry name" value="CDV3"/>
</dbReference>
<dbReference type="PANTHER" id="PTHR16284">
    <property type="entry name" value="PROTEIN CDV3 HOMOLOG"/>
    <property type="match status" value="1"/>
</dbReference>
<dbReference type="PANTHER" id="PTHR16284:SF13">
    <property type="entry name" value="PROTEIN CDV3 HOMOLOG"/>
    <property type="match status" value="1"/>
</dbReference>
<dbReference type="Pfam" id="PF15359">
    <property type="entry name" value="CDV3"/>
    <property type="match status" value="1"/>
</dbReference>
<comment type="similarity">
    <text evidence="2">Belongs to the CDV3 family.</text>
</comment>
<evidence type="ECO:0000256" key="1">
    <source>
        <dbReference type="SAM" id="MobiDB-lite"/>
    </source>
</evidence>
<evidence type="ECO:0000305" key="2"/>
<organism>
    <name type="scientific">Drosophila yakuba</name>
    <name type="common">Fruit fly</name>
    <dbReference type="NCBI Taxonomy" id="7245"/>
    <lineage>
        <taxon>Eukaryota</taxon>
        <taxon>Metazoa</taxon>
        <taxon>Ecdysozoa</taxon>
        <taxon>Arthropoda</taxon>
        <taxon>Hexapoda</taxon>
        <taxon>Insecta</taxon>
        <taxon>Pterygota</taxon>
        <taxon>Neoptera</taxon>
        <taxon>Endopterygota</taxon>
        <taxon>Diptera</taxon>
        <taxon>Brachycera</taxon>
        <taxon>Muscomorpha</taxon>
        <taxon>Ephydroidea</taxon>
        <taxon>Drosophilidae</taxon>
        <taxon>Drosophila</taxon>
        <taxon>Sophophora</taxon>
    </lineage>
</organism>